<name>NS1_FPV19</name>
<keyword id="KW-0067">ATP-binding</keyword>
<keyword id="KW-0190">Covalent protein-DNA linkage</keyword>
<keyword id="KW-0235">DNA replication</keyword>
<keyword id="KW-0238">DNA-binding</keyword>
<keyword id="KW-0255">Endonuclease</keyword>
<keyword id="KW-1078">G1/S host cell cycle checkpoint dysregulation by virus</keyword>
<keyword id="KW-0347">Helicase</keyword>
<keyword id="KW-1079">Host G2/M cell cycle arrest by virus</keyword>
<keyword id="KW-1048">Host nucleus</keyword>
<keyword id="KW-0945">Host-virus interaction</keyword>
<keyword id="KW-0378">Hydrolase</keyword>
<keyword id="KW-0460">Magnesium</keyword>
<keyword id="KW-0479">Metal-binding</keyword>
<keyword id="KW-1119">Modulation of host cell apoptosis by virus</keyword>
<keyword id="KW-1121">Modulation of host cell cycle by virus</keyword>
<keyword id="KW-0540">Nuclease</keyword>
<keyword id="KW-0547">Nucleotide-binding</keyword>
<keyword id="KW-0804">Transcription</keyword>
<keyword id="KW-0805">Transcription regulation</keyword>
<keyword id="KW-1194">Viral DNA replication</keyword>
<keyword id="KW-0231">Viral genome packaging</keyword>
<keyword id="KW-1188">Viral release from host cell</keyword>
<sequence length="668" mass="76768">MSGNQYTEEVMEGVNWLKKHAENEAFSFVFKCDNVQLNGKDVRWNNYTKPIQNEELTSLIRGAQTAMDQTEEEEMDWESEVDSLAKKQVQTFDALIKKCLFEVFVSKNIEPNECVWFIQHEWGKDQGWHCHVLLHSKNLQQATGKWLRRQMNMYWSRWLVTLCSVNLTPTEKIKLREIAEDSEWVTILTYRHKQTKKDYVKMVHFGNMIAYYFLTKKKIVHMTKESGYFLSTDSGWKFNFMKYQDRHTVSTLYTEQMKPETVETTVTTAQETKRGRIQTKKEVSIKCTLRDLVSKRVTSPEDWMMLQPDSYIEMMAQPGGENLLKNTLEICTLTLARTKTAFELILEKADNTKLTNFDLANSRTCQIFRMHGWNWIKVCHAIACVLNRQGGKRNTVLFHGPASTGKSIIAQAIAQAVGNVGCYNAANVNFPFNDCTNKNLIWIEEAGNFGQQVNQFKAICSGQTIRIDQKGKGSKQIEPTPVIMTTNENITIVRIGCEERPEHTQPIRDRMLNIKLVCKLPGDFGLVDKEEWPLICAWLVKHGYQSTMANYTHHWGKVPEWDENWAEPKIQEGIISPGCKDLETQAASNPQSQDHVLTPLTPDVVDLALEPWSTPDTPIAETANQQSNQLGVTHKDVQASPTWSEIEADLRAIFTSEQLEEDFRDDLD</sequence>
<accession>P24842</accession>
<evidence type="ECO:0000250" key="1">
    <source>
        <dbReference type="UniProtKB" id="D0EZM8"/>
    </source>
</evidence>
<evidence type="ECO:0000250" key="2">
    <source>
        <dbReference type="UniProtKB" id="P03134"/>
    </source>
</evidence>
<evidence type="ECO:0000250" key="3">
    <source>
        <dbReference type="UniProtKB" id="Q9PZT1"/>
    </source>
</evidence>
<evidence type="ECO:0000255" key="4">
    <source>
        <dbReference type="PROSITE-ProRule" id="PRU00551"/>
    </source>
</evidence>
<evidence type="ECO:0000255" key="5">
    <source>
        <dbReference type="PROSITE-ProRule" id="PRU01366"/>
    </source>
</evidence>
<evidence type="ECO:0000305" key="6"/>
<comment type="function">
    <text evidence="2">Multifunctional protein which displays endonuclease and helicase activities required for initiating and directing viral DNA replication. Also plays a role in viral packaging and transactivation of several promoters. Binds site-specifically to 2-3 approximate tandem copies within the origins of replication (Ori), unwinds this hairpin region and nicks one DNA strand thereby initiating the rolling circle replication (RCR). Cooperatively binds Ori with host PIF and probably other host factors, which activate the nickase function of NS1. Becomes covalently attached to the 5' end of the nick and provides a 3'OH for priming DNA synthesis. The helicase activity unwinds DNA in a 3'-5' direction on the longer strand. Inhibits the host cell cycle during the G1/S transition, the S-phase, and the G2/M transition. These arrests may provide essential cellular factors for viral DNA replication. Promotes apoptosis in host cell.</text>
</comment>
<comment type="catalytic activity">
    <reaction evidence="2">
        <text>ATP + H2O = ADP + phosphate + H(+)</text>
        <dbReference type="Rhea" id="RHEA:13065"/>
        <dbReference type="ChEBI" id="CHEBI:15377"/>
        <dbReference type="ChEBI" id="CHEBI:15378"/>
        <dbReference type="ChEBI" id="CHEBI:30616"/>
        <dbReference type="ChEBI" id="CHEBI:43474"/>
        <dbReference type="ChEBI" id="CHEBI:456216"/>
        <dbReference type="EC" id="3.6.4.12"/>
    </reaction>
</comment>
<comment type="cofactor">
    <cofactor evidence="2">
        <name>Mg(2+)</name>
        <dbReference type="ChEBI" id="CHEBI:18420"/>
    </cofactor>
    <text evidence="2">The endonuclease active site can probably bind other divalent cations.</text>
</comment>
<comment type="subunit">
    <text evidence="3">Homooligomer; when bound to DNA.</text>
</comment>
<comment type="subcellular location">
    <subcellularLocation>
        <location evidence="1">Host nucleus</location>
    </subcellularLocation>
</comment>
<comment type="domain">
    <text evidence="2 3">In the N-terminus, the endonuclease region is involved in binding to the origin of replication. In the middle, there are the ATPase and helicase activities (By similarity). The C-terminus probably contains a transactivation domain (By similarity).</text>
</comment>
<comment type="PTM">
    <text evidence="2">Phosphorylated.</text>
</comment>
<comment type="similarity">
    <text evidence="6">Belongs to the parvoviruses initiator protein NS1 family.</text>
</comment>
<dbReference type="EC" id="3.1.21.-" evidence="3"/>
<dbReference type="EC" id="3.6.4.12" evidence="3"/>
<dbReference type="EMBL" id="X55115">
    <property type="protein sequence ID" value="CAA38910.1"/>
    <property type="molecule type" value="Genomic_DNA"/>
</dbReference>
<dbReference type="EMBL" id="M38246">
    <property type="protein sequence ID" value="AAC37927.1"/>
    <property type="molecule type" value="Genomic_DNA"/>
</dbReference>
<dbReference type="PIR" id="A36608">
    <property type="entry name" value="UYPVFP"/>
</dbReference>
<dbReference type="SMR" id="P24842"/>
<dbReference type="Proteomes" id="UP000002478">
    <property type="component" value="Genome"/>
</dbReference>
<dbReference type="GO" id="GO:0042025">
    <property type="term" value="C:host cell nucleus"/>
    <property type="evidence" value="ECO:0007669"/>
    <property type="project" value="UniProtKB-SubCell"/>
</dbReference>
<dbReference type="GO" id="GO:0005524">
    <property type="term" value="F:ATP binding"/>
    <property type="evidence" value="ECO:0007669"/>
    <property type="project" value="UniProtKB-KW"/>
</dbReference>
<dbReference type="GO" id="GO:0016887">
    <property type="term" value="F:ATP hydrolysis activity"/>
    <property type="evidence" value="ECO:0007669"/>
    <property type="project" value="RHEA"/>
</dbReference>
<dbReference type="GO" id="GO:0003677">
    <property type="term" value="F:DNA binding"/>
    <property type="evidence" value="ECO:0007669"/>
    <property type="project" value="UniProtKB-KW"/>
</dbReference>
<dbReference type="GO" id="GO:0004519">
    <property type="term" value="F:endonuclease activity"/>
    <property type="evidence" value="ECO:0007669"/>
    <property type="project" value="UniProtKB-KW"/>
</dbReference>
<dbReference type="GO" id="GO:0004386">
    <property type="term" value="F:helicase activity"/>
    <property type="evidence" value="ECO:0007669"/>
    <property type="project" value="UniProtKB-KW"/>
</dbReference>
<dbReference type="GO" id="GO:0046872">
    <property type="term" value="F:metal ion binding"/>
    <property type="evidence" value="ECO:0007669"/>
    <property type="project" value="UniProtKB-KW"/>
</dbReference>
<dbReference type="GO" id="GO:0006260">
    <property type="term" value="P:DNA replication"/>
    <property type="evidence" value="ECO:0007669"/>
    <property type="project" value="UniProtKB-KW"/>
</dbReference>
<dbReference type="GO" id="GO:0039592">
    <property type="term" value="P:symbiont-mediated arrest of host cell cycle during G2/M transition"/>
    <property type="evidence" value="ECO:0007669"/>
    <property type="project" value="UniProtKB-KW"/>
</dbReference>
<dbReference type="GO" id="GO:0052150">
    <property type="term" value="P:symbiont-mediated perturbation of host apoptosis"/>
    <property type="evidence" value="ECO:0007669"/>
    <property type="project" value="UniProtKB-KW"/>
</dbReference>
<dbReference type="GO" id="GO:0039645">
    <property type="term" value="P:symbiont-mediated perturbation of host cell cycle G1/S transition checkpoint"/>
    <property type="evidence" value="ECO:0007669"/>
    <property type="project" value="UniProtKB-KW"/>
</dbReference>
<dbReference type="GO" id="GO:0039693">
    <property type="term" value="P:viral DNA genome replication"/>
    <property type="evidence" value="ECO:0007669"/>
    <property type="project" value="UniProtKB-KW"/>
</dbReference>
<dbReference type="Gene3D" id="3.40.1310.20">
    <property type="match status" value="1"/>
</dbReference>
<dbReference type="Gene3D" id="3.40.50.300">
    <property type="entry name" value="P-loop containing nucleotide triphosphate hydrolases"/>
    <property type="match status" value="1"/>
</dbReference>
<dbReference type="InterPro" id="IPR014015">
    <property type="entry name" value="Helicase_SF3_DNA-vir"/>
</dbReference>
<dbReference type="InterPro" id="IPR027417">
    <property type="entry name" value="P-loop_NTPase"/>
</dbReference>
<dbReference type="InterPro" id="IPR021972">
    <property type="entry name" value="Parvovirus_NS1_C"/>
</dbReference>
<dbReference type="InterPro" id="IPR001257">
    <property type="entry name" value="Parvovirus_NS1_helicase"/>
</dbReference>
<dbReference type="InterPro" id="IPR021076">
    <property type="entry name" value="Parvovirus_NS1_N"/>
</dbReference>
<dbReference type="InterPro" id="IPR049901">
    <property type="entry name" value="PV_NS1-NUC"/>
</dbReference>
<dbReference type="Pfam" id="PF12117">
    <property type="entry name" value="NS1_C"/>
    <property type="match status" value="1"/>
</dbReference>
<dbReference type="Pfam" id="PF01057">
    <property type="entry name" value="Parvo_NS1"/>
    <property type="match status" value="1"/>
</dbReference>
<dbReference type="Pfam" id="PF12433">
    <property type="entry name" value="PV_NSP1"/>
    <property type="match status" value="1"/>
</dbReference>
<dbReference type="SUPFAM" id="SSF55464">
    <property type="entry name" value="Origin of replication-binding domain, RBD-like"/>
    <property type="match status" value="1"/>
</dbReference>
<dbReference type="SUPFAM" id="SSF52540">
    <property type="entry name" value="P-loop containing nucleoside triphosphate hydrolases"/>
    <property type="match status" value="1"/>
</dbReference>
<dbReference type="PROSITE" id="PS52022">
    <property type="entry name" value="PV_NS1_NUC"/>
    <property type="match status" value="1"/>
</dbReference>
<dbReference type="PROSITE" id="PS51206">
    <property type="entry name" value="SF3_HELICASE_1"/>
    <property type="match status" value="1"/>
</dbReference>
<reference key="1">
    <citation type="journal article" date="1990" name="J. Gen. Virol.">
        <title>Nucleotide sequence of feline panleukopenia virus: comparison with canine parvovirus identifies host-specific differences.</title>
        <authorList>
            <person name="Martyn J.C."/>
            <person name="Davidson B.E."/>
            <person name="Studdert M.J."/>
        </authorList>
    </citation>
    <scope>NUCLEOTIDE SEQUENCE [GENOMIC DNA]</scope>
    <source>
        <strain>193/70</strain>
    </source>
</reference>
<reference key="2">
    <citation type="journal article" date="1991" name="Virology">
        <title>Mapping specific functions in the capsid structure of canine parvovirus and feline panleukopenia virus using infectious plasmid clones.</title>
        <authorList>
            <person name="Parrish C.R."/>
        </authorList>
    </citation>
    <scope>NUCLEOTIDE SEQUENCE [GENOMIC DNA]</scope>
    <source>
        <strain>CU-4</strain>
    </source>
</reference>
<gene>
    <name type="primary">NS1</name>
</gene>
<feature type="chain" id="PRO_0000222463" description="Initiator protein NS1">
    <location>
        <begin position="1"/>
        <end position="668"/>
    </location>
</feature>
<feature type="domain" description="PV NS1-Nuc" evidence="5">
    <location>
        <begin position="21"/>
        <end position="260"/>
    </location>
</feature>
<feature type="domain" description="SF3 helicase" evidence="4">
    <location>
        <begin position="367"/>
        <end position="529"/>
    </location>
</feature>
<feature type="region of interest" description="DNA-binding" evidence="2">
    <location>
        <begin position="1"/>
        <end position="277"/>
    </location>
</feature>
<feature type="region of interest" description="Ori-binding" evidence="2">
    <location>
        <begin position="193"/>
        <end position="197"/>
    </location>
</feature>
<feature type="short sequence motif" description="RCR-2" evidence="5">
    <location>
        <begin position="129"/>
        <end position="131"/>
    </location>
</feature>
<feature type="short sequence motif" description="RCR-3" evidence="5">
    <location>
        <begin position="212"/>
        <end position="216"/>
    </location>
</feature>
<feature type="active site" description="For nuclease activity" evidence="5">
    <location>
        <position position="212"/>
    </location>
</feature>
<feature type="binding site" evidence="5">
    <location>
        <position position="121"/>
    </location>
    <ligand>
        <name>a divalent metal cation</name>
        <dbReference type="ChEBI" id="CHEBI:60240"/>
    </ligand>
</feature>
<feature type="binding site" evidence="5">
    <location>
        <position position="129"/>
    </location>
    <ligand>
        <name>a divalent metal cation</name>
        <dbReference type="ChEBI" id="CHEBI:60240"/>
    </ligand>
</feature>
<feature type="binding site" evidence="5">
    <location>
        <position position="131"/>
    </location>
    <ligand>
        <name>a divalent metal cation</name>
        <dbReference type="ChEBI" id="CHEBI:60240"/>
    </ligand>
</feature>
<feature type="binding site" evidence="4">
    <location>
        <begin position="400"/>
        <end position="407"/>
    </location>
    <ligand>
        <name>ATP</name>
        <dbReference type="ChEBI" id="CHEBI:30616"/>
    </ligand>
</feature>
<feature type="sequence conflict" description="In Ref. 2; AAC37927." evidence="6" ref="2">
    <original>N</original>
    <variation>D</variation>
    <location>
        <position position="23"/>
    </location>
</feature>
<feature type="sequence conflict" description="In Ref. 2; AAC37927." evidence="6" ref="2">
    <original>I</original>
    <variation>V</variation>
    <location>
        <position position="443"/>
    </location>
</feature>
<feature type="sequence conflict" description="In Ref. 2; AAC37927." evidence="6" ref="2">
    <original>I</original>
    <variation>N</variation>
    <location>
        <position position="575"/>
    </location>
</feature>
<organismHost>
    <name type="scientific">Felidae</name>
    <name type="common">cat family</name>
    <dbReference type="NCBI Taxonomy" id="9681"/>
</organismHost>
<organismHost>
    <name type="scientific">Nasua nasua</name>
    <name type="common">Ring-tailed coati</name>
    <dbReference type="NCBI Taxonomy" id="9651"/>
</organismHost>
<organismHost>
    <name type="scientific">Procyon lotor</name>
    <name type="common">Raccoon</name>
    <dbReference type="NCBI Taxonomy" id="9654"/>
</organismHost>
<proteinExistence type="inferred from homology"/>
<organism>
    <name type="scientific">Feline panleukopenia virus (strain 193)</name>
    <name type="common">FPV</name>
    <dbReference type="NCBI Taxonomy" id="10787"/>
    <lineage>
        <taxon>Viruses</taxon>
        <taxon>Monodnaviria</taxon>
        <taxon>Shotokuvirae</taxon>
        <taxon>Cossaviricota</taxon>
        <taxon>Quintoviricetes</taxon>
        <taxon>Piccovirales</taxon>
        <taxon>Parvoviridae</taxon>
        <taxon>Parvovirinae</taxon>
        <taxon>Protoparvovirus</taxon>
        <taxon>Protoparvovirus carnivoran1</taxon>
    </lineage>
</organism>
<protein>
    <recommendedName>
        <fullName evidence="2">Initiator protein NS1</fullName>
        <shortName>NS1</shortName>
        <ecNumber evidence="3">3.1.21.-</ecNumber>
        <ecNumber evidence="3">3.6.4.12</ecNumber>
    </recommendedName>
    <alternativeName>
        <fullName>NCVP1</fullName>
    </alternativeName>
    <alternativeName>
        <fullName>Non-capsid protein NS-1</fullName>
    </alternativeName>
    <alternativeName>
        <fullName>Non-structural protein 1</fullName>
    </alternativeName>
    <alternativeName>
        <fullName>Non-structural protein NS1</fullName>
    </alternativeName>
</protein>